<organism>
    <name type="scientific">Shewanella denitrificans (strain OS217 / ATCC BAA-1090 / DSM 15013)</name>
    <dbReference type="NCBI Taxonomy" id="318161"/>
    <lineage>
        <taxon>Bacteria</taxon>
        <taxon>Pseudomonadati</taxon>
        <taxon>Pseudomonadota</taxon>
        <taxon>Gammaproteobacteria</taxon>
        <taxon>Alteromonadales</taxon>
        <taxon>Shewanellaceae</taxon>
        <taxon>Shewanella</taxon>
    </lineage>
</organism>
<keyword id="KW-0997">Cell inner membrane</keyword>
<keyword id="KW-1003">Cell membrane</keyword>
<keyword id="KW-0472">Membrane</keyword>
<keyword id="KW-1185">Reference proteome</keyword>
<keyword id="KW-0812">Transmembrane</keyword>
<keyword id="KW-1133">Transmembrane helix</keyword>
<accession>Q12IK3</accession>
<reference key="1">
    <citation type="submission" date="2006-03" db="EMBL/GenBank/DDBJ databases">
        <title>Complete sequence of Shewanella denitrificans OS217.</title>
        <authorList>
            <consortium name="US DOE Joint Genome Institute"/>
            <person name="Copeland A."/>
            <person name="Lucas S."/>
            <person name="Lapidus A."/>
            <person name="Barry K."/>
            <person name="Detter J.C."/>
            <person name="Glavina del Rio T."/>
            <person name="Hammon N."/>
            <person name="Israni S."/>
            <person name="Dalin E."/>
            <person name="Tice H."/>
            <person name="Pitluck S."/>
            <person name="Brettin T."/>
            <person name="Bruce D."/>
            <person name="Han C."/>
            <person name="Tapia R."/>
            <person name="Gilna P."/>
            <person name="Kiss H."/>
            <person name="Schmutz J."/>
            <person name="Larimer F."/>
            <person name="Land M."/>
            <person name="Hauser L."/>
            <person name="Kyrpides N."/>
            <person name="Lykidis A."/>
            <person name="Richardson P."/>
        </authorList>
    </citation>
    <scope>NUCLEOTIDE SEQUENCE [LARGE SCALE GENOMIC DNA]</scope>
    <source>
        <strain>OS217 / ATCC BAA-1090 / DSM 15013</strain>
    </source>
</reference>
<sequence length="313" mass="34898">MDIQQQTRGFRYFYISVWRFILHLKARLIDDQINIRAGHLAYVTLLSLVPMIAVTMSMLSAFPVFKGIRVNIESLVYSYFLPAAGDSAQVYINEFVNNASKGTFVGIIALLVVAILLISAIDKALNNIWRTTEKRSLVVSFSMYWMVLTLGPVLMGSSLVATSYVVSLELFSQSELSGLLPWLVERLPMLFSVASILLLYMVVPTQKVRFFHALLGAVVAALLFEAGKRAFAYYVTQFPSYEAIYGALATIPILFVWVYLSWMIVLVGAEITAALPEYLDDPFEKDGTKATTALTENKEVDESEPNQGNDTIA</sequence>
<gene>
    <name type="ordered locus">Sden_3448</name>
</gene>
<feature type="chain" id="PRO_1000044725" description="UPF0761 membrane protein Sden_3448">
    <location>
        <begin position="1"/>
        <end position="313"/>
    </location>
</feature>
<feature type="transmembrane region" description="Helical" evidence="1">
    <location>
        <begin position="45"/>
        <end position="65"/>
    </location>
</feature>
<feature type="transmembrane region" description="Helical" evidence="1">
    <location>
        <begin position="102"/>
        <end position="122"/>
    </location>
</feature>
<feature type="transmembrane region" description="Helical" evidence="1">
    <location>
        <begin position="136"/>
        <end position="156"/>
    </location>
</feature>
<feature type="transmembrane region" description="Helical" evidence="1">
    <location>
        <begin position="183"/>
        <end position="203"/>
    </location>
</feature>
<feature type="transmembrane region" description="Helical" evidence="1">
    <location>
        <begin position="207"/>
        <end position="227"/>
    </location>
</feature>
<feature type="transmembrane region" description="Helical" evidence="1">
    <location>
        <begin position="247"/>
        <end position="267"/>
    </location>
</feature>
<feature type="region of interest" description="Disordered" evidence="2">
    <location>
        <begin position="290"/>
        <end position="313"/>
    </location>
</feature>
<protein>
    <recommendedName>
        <fullName evidence="1">UPF0761 membrane protein Sden_3448</fullName>
    </recommendedName>
</protein>
<name>Y3448_SHEDO</name>
<dbReference type="EMBL" id="CP000302">
    <property type="protein sequence ID" value="ABE56723.1"/>
    <property type="molecule type" value="Genomic_DNA"/>
</dbReference>
<dbReference type="RefSeq" id="WP_011497864.1">
    <property type="nucleotide sequence ID" value="NC_007954.1"/>
</dbReference>
<dbReference type="STRING" id="318161.Sden_3448"/>
<dbReference type="KEGG" id="sdn:Sden_3448"/>
<dbReference type="eggNOG" id="COG1295">
    <property type="taxonomic scope" value="Bacteria"/>
</dbReference>
<dbReference type="HOGENOM" id="CLU_032288_0_0_6"/>
<dbReference type="OrthoDB" id="9808671at2"/>
<dbReference type="Proteomes" id="UP000001982">
    <property type="component" value="Chromosome"/>
</dbReference>
<dbReference type="GO" id="GO:0005886">
    <property type="term" value="C:plasma membrane"/>
    <property type="evidence" value="ECO:0007669"/>
    <property type="project" value="UniProtKB-SubCell"/>
</dbReference>
<dbReference type="HAMAP" id="MF_00672">
    <property type="entry name" value="UPF0761"/>
    <property type="match status" value="1"/>
</dbReference>
<dbReference type="InterPro" id="IPR023679">
    <property type="entry name" value="UPF0761_bac"/>
</dbReference>
<dbReference type="InterPro" id="IPR017039">
    <property type="entry name" value="Virul_fac_BrkB"/>
</dbReference>
<dbReference type="NCBIfam" id="NF002457">
    <property type="entry name" value="PRK01637.1"/>
    <property type="match status" value="1"/>
</dbReference>
<dbReference type="NCBIfam" id="TIGR00765">
    <property type="entry name" value="yihY_not_rbn"/>
    <property type="match status" value="1"/>
</dbReference>
<dbReference type="PANTHER" id="PTHR30213">
    <property type="entry name" value="INNER MEMBRANE PROTEIN YHJD"/>
    <property type="match status" value="1"/>
</dbReference>
<dbReference type="PANTHER" id="PTHR30213:SF0">
    <property type="entry name" value="UPF0761 MEMBRANE PROTEIN YIHY"/>
    <property type="match status" value="1"/>
</dbReference>
<dbReference type="Pfam" id="PF03631">
    <property type="entry name" value="Virul_fac_BrkB"/>
    <property type="match status" value="1"/>
</dbReference>
<dbReference type="PIRSF" id="PIRSF035875">
    <property type="entry name" value="RNase_BN"/>
    <property type="match status" value="1"/>
</dbReference>
<comment type="subcellular location">
    <subcellularLocation>
        <location evidence="1">Cell inner membrane</location>
        <topology evidence="1">Multi-pass membrane protein</topology>
    </subcellularLocation>
</comment>
<comment type="similarity">
    <text evidence="1">Belongs to the UPF0761 family.</text>
</comment>
<evidence type="ECO:0000255" key="1">
    <source>
        <dbReference type="HAMAP-Rule" id="MF_00672"/>
    </source>
</evidence>
<evidence type="ECO:0000256" key="2">
    <source>
        <dbReference type="SAM" id="MobiDB-lite"/>
    </source>
</evidence>
<proteinExistence type="inferred from homology"/>